<name>FLZ2_ARATH</name>
<reference key="1">
    <citation type="journal article" date="1998" name="Nature">
        <title>Analysis of 1.9 Mb of contiguous sequence from chromosome 4 of Arabidopsis thaliana.</title>
        <authorList>
            <person name="Bevan M."/>
            <person name="Bancroft I."/>
            <person name="Bent E."/>
            <person name="Love K."/>
            <person name="Goodman H.M."/>
            <person name="Dean C."/>
            <person name="Bergkamp R."/>
            <person name="Dirkse W."/>
            <person name="van Staveren M."/>
            <person name="Stiekema W."/>
            <person name="Drost L."/>
            <person name="Ridley P."/>
            <person name="Hudson S.-A."/>
            <person name="Patel K."/>
            <person name="Murphy G."/>
            <person name="Piffanelli P."/>
            <person name="Wedler H."/>
            <person name="Wedler E."/>
            <person name="Wambutt R."/>
            <person name="Weitzenegger T."/>
            <person name="Pohl T."/>
            <person name="Terryn N."/>
            <person name="Gielen J."/>
            <person name="Villarroel R."/>
            <person name="De Clercq R."/>
            <person name="van Montagu M."/>
            <person name="Lecharny A."/>
            <person name="Aubourg S."/>
            <person name="Gy I."/>
            <person name="Kreis M."/>
            <person name="Lao N."/>
            <person name="Kavanagh T."/>
            <person name="Hempel S."/>
            <person name="Kotter P."/>
            <person name="Entian K.-D."/>
            <person name="Rieger M."/>
            <person name="Schaefer M."/>
            <person name="Funk B."/>
            <person name="Mueller-Auer S."/>
            <person name="Silvey M."/>
            <person name="James R."/>
            <person name="Monfort A."/>
            <person name="Pons A."/>
            <person name="Puigdomenech P."/>
            <person name="Douka A."/>
            <person name="Voukelatou E."/>
            <person name="Milioni D."/>
            <person name="Hatzopoulos P."/>
            <person name="Piravandi E."/>
            <person name="Obermaier B."/>
            <person name="Hilbert H."/>
            <person name="Duesterhoeft A."/>
            <person name="Moores T."/>
            <person name="Jones J.D.G."/>
            <person name="Eneva T."/>
            <person name="Palme K."/>
            <person name="Benes V."/>
            <person name="Rechmann S."/>
            <person name="Ansorge W."/>
            <person name="Cooke R."/>
            <person name="Berger C."/>
            <person name="Delseny M."/>
            <person name="Voet M."/>
            <person name="Volckaert G."/>
            <person name="Mewes H.-W."/>
            <person name="Klosterman S."/>
            <person name="Schueller C."/>
            <person name="Chalwatzis N."/>
        </authorList>
    </citation>
    <scope>NUCLEOTIDE SEQUENCE [LARGE SCALE GENOMIC DNA]</scope>
    <source>
        <strain>cv. Columbia</strain>
    </source>
</reference>
<reference key="2">
    <citation type="journal article" date="1999" name="Nature">
        <title>Sequence and analysis of chromosome 4 of the plant Arabidopsis thaliana.</title>
        <authorList>
            <person name="Mayer K.F.X."/>
            <person name="Schueller C."/>
            <person name="Wambutt R."/>
            <person name="Murphy G."/>
            <person name="Volckaert G."/>
            <person name="Pohl T."/>
            <person name="Duesterhoeft A."/>
            <person name="Stiekema W."/>
            <person name="Entian K.-D."/>
            <person name="Terryn N."/>
            <person name="Harris B."/>
            <person name="Ansorge W."/>
            <person name="Brandt P."/>
            <person name="Grivell L.A."/>
            <person name="Rieger M."/>
            <person name="Weichselgartner M."/>
            <person name="de Simone V."/>
            <person name="Obermaier B."/>
            <person name="Mache R."/>
            <person name="Mueller M."/>
            <person name="Kreis M."/>
            <person name="Delseny M."/>
            <person name="Puigdomenech P."/>
            <person name="Watson M."/>
            <person name="Schmidtheini T."/>
            <person name="Reichert B."/>
            <person name="Portetelle D."/>
            <person name="Perez-Alonso M."/>
            <person name="Boutry M."/>
            <person name="Bancroft I."/>
            <person name="Vos P."/>
            <person name="Hoheisel J."/>
            <person name="Zimmermann W."/>
            <person name="Wedler H."/>
            <person name="Ridley P."/>
            <person name="Langham S.-A."/>
            <person name="McCullagh B."/>
            <person name="Bilham L."/>
            <person name="Robben J."/>
            <person name="van der Schueren J."/>
            <person name="Grymonprez B."/>
            <person name="Chuang Y.-J."/>
            <person name="Vandenbussche F."/>
            <person name="Braeken M."/>
            <person name="Weltjens I."/>
            <person name="Voet M."/>
            <person name="Bastiaens I."/>
            <person name="Aert R."/>
            <person name="Defoor E."/>
            <person name="Weitzenegger T."/>
            <person name="Bothe G."/>
            <person name="Ramsperger U."/>
            <person name="Hilbert H."/>
            <person name="Braun M."/>
            <person name="Holzer E."/>
            <person name="Brandt A."/>
            <person name="Peters S."/>
            <person name="van Staveren M."/>
            <person name="Dirkse W."/>
            <person name="Mooijman P."/>
            <person name="Klein Lankhorst R."/>
            <person name="Rose M."/>
            <person name="Hauf J."/>
            <person name="Koetter P."/>
            <person name="Berneiser S."/>
            <person name="Hempel S."/>
            <person name="Feldpausch M."/>
            <person name="Lamberth S."/>
            <person name="Van den Daele H."/>
            <person name="De Keyser A."/>
            <person name="Buysshaert C."/>
            <person name="Gielen J."/>
            <person name="Villarroel R."/>
            <person name="De Clercq R."/>
            <person name="van Montagu M."/>
            <person name="Rogers J."/>
            <person name="Cronin A."/>
            <person name="Quail M.A."/>
            <person name="Bray-Allen S."/>
            <person name="Clark L."/>
            <person name="Doggett J."/>
            <person name="Hall S."/>
            <person name="Kay M."/>
            <person name="Lennard N."/>
            <person name="McLay K."/>
            <person name="Mayes R."/>
            <person name="Pettett A."/>
            <person name="Rajandream M.A."/>
            <person name="Lyne M."/>
            <person name="Benes V."/>
            <person name="Rechmann S."/>
            <person name="Borkova D."/>
            <person name="Bloecker H."/>
            <person name="Scharfe M."/>
            <person name="Grimm M."/>
            <person name="Loehnert T.-H."/>
            <person name="Dose S."/>
            <person name="de Haan M."/>
            <person name="Maarse A.C."/>
            <person name="Schaefer M."/>
            <person name="Mueller-Auer S."/>
            <person name="Gabel C."/>
            <person name="Fuchs M."/>
            <person name="Fartmann B."/>
            <person name="Granderath K."/>
            <person name="Dauner D."/>
            <person name="Herzl A."/>
            <person name="Neumann S."/>
            <person name="Argiriou A."/>
            <person name="Vitale D."/>
            <person name="Liguori R."/>
            <person name="Piravandi E."/>
            <person name="Massenet O."/>
            <person name="Quigley F."/>
            <person name="Clabauld G."/>
            <person name="Muendlein A."/>
            <person name="Felber R."/>
            <person name="Schnabl S."/>
            <person name="Hiller R."/>
            <person name="Schmidt W."/>
            <person name="Lecharny A."/>
            <person name="Aubourg S."/>
            <person name="Chefdor F."/>
            <person name="Cooke R."/>
            <person name="Berger C."/>
            <person name="Monfort A."/>
            <person name="Casacuberta E."/>
            <person name="Gibbons T."/>
            <person name="Weber N."/>
            <person name="Vandenbol M."/>
            <person name="Bargues M."/>
            <person name="Terol J."/>
            <person name="Torres A."/>
            <person name="Perez-Perez A."/>
            <person name="Purnelle B."/>
            <person name="Bent E."/>
            <person name="Johnson S."/>
            <person name="Tacon D."/>
            <person name="Jesse T."/>
            <person name="Heijnen L."/>
            <person name="Schwarz S."/>
            <person name="Scholler P."/>
            <person name="Heber S."/>
            <person name="Francs P."/>
            <person name="Bielke C."/>
            <person name="Frishman D."/>
            <person name="Haase D."/>
            <person name="Lemcke K."/>
            <person name="Mewes H.-W."/>
            <person name="Stocker S."/>
            <person name="Zaccaria P."/>
            <person name="Bevan M."/>
            <person name="Wilson R.K."/>
            <person name="de la Bastide M."/>
            <person name="Habermann K."/>
            <person name="Parnell L."/>
            <person name="Dedhia N."/>
            <person name="Gnoj L."/>
            <person name="Schutz K."/>
            <person name="Huang E."/>
            <person name="Spiegel L."/>
            <person name="Sekhon M."/>
            <person name="Murray J."/>
            <person name="Sheet P."/>
            <person name="Cordes M."/>
            <person name="Abu-Threideh J."/>
            <person name="Stoneking T."/>
            <person name="Kalicki J."/>
            <person name="Graves T."/>
            <person name="Harmon G."/>
            <person name="Edwards J."/>
            <person name="Latreille P."/>
            <person name="Courtney L."/>
            <person name="Cloud J."/>
            <person name="Abbott A."/>
            <person name="Scott K."/>
            <person name="Johnson D."/>
            <person name="Minx P."/>
            <person name="Bentley D."/>
            <person name="Fulton B."/>
            <person name="Miller N."/>
            <person name="Greco T."/>
            <person name="Kemp K."/>
            <person name="Kramer J."/>
            <person name="Fulton L."/>
            <person name="Mardis E."/>
            <person name="Dante M."/>
            <person name="Pepin K."/>
            <person name="Hillier L.W."/>
            <person name="Nelson J."/>
            <person name="Spieth J."/>
            <person name="Ryan E."/>
            <person name="Andrews S."/>
            <person name="Geisel C."/>
            <person name="Layman D."/>
            <person name="Du H."/>
            <person name="Ali J."/>
            <person name="Berghoff A."/>
            <person name="Jones K."/>
            <person name="Drone K."/>
            <person name="Cotton M."/>
            <person name="Joshu C."/>
            <person name="Antonoiu B."/>
            <person name="Zidanic M."/>
            <person name="Strong C."/>
            <person name="Sun H."/>
            <person name="Lamar B."/>
            <person name="Yordan C."/>
            <person name="Ma P."/>
            <person name="Zhong J."/>
            <person name="Preston R."/>
            <person name="Vil D."/>
            <person name="Shekher M."/>
            <person name="Matero A."/>
            <person name="Shah R."/>
            <person name="Swaby I.K."/>
            <person name="O'Shaughnessy A."/>
            <person name="Rodriguez M."/>
            <person name="Hoffman J."/>
            <person name="Till S."/>
            <person name="Granat S."/>
            <person name="Shohdy N."/>
            <person name="Hasegawa A."/>
            <person name="Hameed A."/>
            <person name="Lodhi M."/>
            <person name="Johnson A."/>
            <person name="Chen E."/>
            <person name="Marra M.A."/>
            <person name="Martienssen R."/>
            <person name="McCombie W.R."/>
        </authorList>
    </citation>
    <scope>NUCLEOTIDE SEQUENCE [LARGE SCALE GENOMIC DNA]</scope>
    <source>
        <strain>cv. Columbia</strain>
    </source>
</reference>
<reference key="3">
    <citation type="journal article" date="2017" name="Plant J.">
        <title>Araport11: a complete reannotation of the Arabidopsis thaliana reference genome.</title>
        <authorList>
            <person name="Cheng C.Y."/>
            <person name="Krishnakumar V."/>
            <person name="Chan A.P."/>
            <person name="Thibaud-Nissen F."/>
            <person name="Schobel S."/>
            <person name="Town C.D."/>
        </authorList>
    </citation>
    <scope>GENOME REANNOTATION</scope>
    <source>
        <strain>cv. Columbia</strain>
    </source>
</reference>
<reference key="4">
    <citation type="journal article" date="2003" name="Science">
        <title>Empirical analysis of transcriptional activity in the Arabidopsis genome.</title>
        <authorList>
            <person name="Yamada K."/>
            <person name="Lim J."/>
            <person name="Dale J.M."/>
            <person name="Chen H."/>
            <person name="Shinn P."/>
            <person name="Palm C.J."/>
            <person name="Southwick A.M."/>
            <person name="Wu H.C."/>
            <person name="Kim C.J."/>
            <person name="Nguyen M."/>
            <person name="Pham P.K."/>
            <person name="Cheuk R.F."/>
            <person name="Karlin-Newmann G."/>
            <person name="Liu S.X."/>
            <person name="Lam B."/>
            <person name="Sakano H."/>
            <person name="Wu T."/>
            <person name="Yu G."/>
            <person name="Miranda M."/>
            <person name="Quach H.L."/>
            <person name="Tripp M."/>
            <person name="Chang C.H."/>
            <person name="Lee J.M."/>
            <person name="Toriumi M.J."/>
            <person name="Chan M.M."/>
            <person name="Tang C.C."/>
            <person name="Onodera C.S."/>
            <person name="Deng J.M."/>
            <person name="Akiyama K."/>
            <person name="Ansari Y."/>
            <person name="Arakawa T."/>
            <person name="Banh J."/>
            <person name="Banno F."/>
            <person name="Bowser L."/>
            <person name="Brooks S.Y."/>
            <person name="Carninci P."/>
            <person name="Chao Q."/>
            <person name="Choy N."/>
            <person name="Enju A."/>
            <person name="Goldsmith A.D."/>
            <person name="Gurjal M."/>
            <person name="Hansen N.F."/>
            <person name="Hayashizaki Y."/>
            <person name="Johnson-Hopson C."/>
            <person name="Hsuan V.W."/>
            <person name="Iida K."/>
            <person name="Karnes M."/>
            <person name="Khan S."/>
            <person name="Koesema E."/>
            <person name="Ishida J."/>
            <person name="Jiang P.X."/>
            <person name="Jones T."/>
            <person name="Kawai J."/>
            <person name="Kamiya A."/>
            <person name="Meyers C."/>
            <person name="Nakajima M."/>
            <person name="Narusaka M."/>
            <person name="Seki M."/>
            <person name="Sakurai T."/>
            <person name="Satou M."/>
            <person name="Tamse R."/>
            <person name="Vaysberg M."/>
            <person name="Wallender E.K."/>
            <person name="Wong C."/>
            <person name="Yamamura Y."/>
            <person name="Yuan S."/>
            <person name="Shinozaki K."/>
            <person name="Davis R.W."/>
            <person name="Theologis A."/>
            <person name="Ecker J.R."/>
        </authorList>
    </citation>
    <scope>NUCLEOTIDE SEQUENCE [LARGE SCALE MRNA]</scope>
    <source>
        <strain>cv. Columbia</strain>
    </source>
</reference>
<reference key="5">
    <citation type="submission" date="2002-03" db="EMBL/GenBank/DDBJ databases">
        <title>Full-length cDNA from Arabidopsis thaliana.</title>
        <authorList>
            <person name="Brover V.V."/>
            <person name="Troukhan M.E."/>
            <person name="Alexandrov N.A."/>
            <person name="Lu Y.-P."/>
            <person name="Flavell R.B."/>
            <person name="Feldmann K.A."/>
        </authorList>
    </citation>
    <scope>NUCLEOTIDE SEQUENCE [LARGE SCALE MRNA]</scope>
</reference>
<reference key="6">
    <citation type="journal article" date="2014" name="Front. Plant Sci.">
        <title>The complex becomes more complex: protein-protein interactions of SnRK1 with DUF581 family proteins provide a framework for cell- and stimulus type-specific SnRK1 signaling in plants.</title>
        <authorList>
            <person name="Nietzsche M."/>
            <person name="Schiessl I."/>
            <person name="Boernke F."/>
        </authorList>
    </citation>
    <scope>GENE FAMILY</scope>
    <scope>INTERACTION WITH KIN10 AND KIN11</scope>
    <scope>FUNCTION</scope>
</reference>
<reference key="7">
    <citation type="journal article" date="2014" name="Front. Plant Sci.">
        <title>Corrigendum: The complex becomes more complex: protein-protein interactions of SnRK1 with DUF581 family proteins provide a framework for cell- and stimulus type-specific SnRK1 signaling in plants.</title>
        <authorList>
            <person name="Boernke F."/>
        </authorList>
    </citation>
    <scope>ERRATUM OF PUBMED:24600465</scope>
</reference>
<reference key="8">
    <citation type="journal article" date="2014" name="PLoS ONE">
        <title>DUF581 is plant specific FCS-like zinc finger involved in protein-protein interaction.</title>
        <authorList>
            <person name="Jamsheer K M."/>
            <person name="Laxmi A."/>
        </authorList>
    </citation>
    <scope>GENE FAMILY</scope>
    <scope>NOMENCLATURE</scope>
</reference>
<reference key="9">
    <citation type="journal article" date="2015" name="Front. Plant Sci.">
        <title>Expression of Arabidopsis FCS-Like Zinc finger genes is differentially regulated by sugars, cellular energy level, and abiotic stress.</title>
        <authorList>
            <person name="Jamsheer K M."/>
            <person name="Laxmi A."/>
        </authorList>
    </citation>
    <scope>INDUCTION</scope>
</reference>
<reference key="10">
    <citation type="journal article" date="2018" name="J. Biol. Chem.">
        <title>The FCS-like zinc finger scaffold of the kinase SnRK1 is formed by the coordinated actions of the FLZ domain and intrinsically disordered regions.</title>
        <authorList>
            <person name="Jamsheer K M."/>
            <person name="Shukla B.N."/>
            <person name="Jindal S."/>
            <person name="Gopan N."/>
            <person name="Mannully C.T."/>
            <person name="Laxmi A."/>
        </authorList>
    </citation>
    <scope>INTERACTION WITH KIN10; KIN11; KINB1; KINB2; KINB3 AND SNF4</scope>
    <scope>SUBUNIT</scope>
</reference>
<evidence type="ECO:0000255" key="1">
    <source>
        <dbReference type="PROSITE-ProRule" id="PRU01131"/>
    </source>
</evidence>
<evidence type="ECO:0000256" key="2">
    <source>
        <dbReference type="SAM" id="MobiDB-lite"/>
    </source>
</evidence>
<evidence type="ECO:0000269" key="3">
    <source>
    </source>
</evidence>
<evidence type="ECO:0000269" key="4">
    <source>
    </source>
</evidence>
<evidence type="ECO:0000269" key="5">
    <source>
    </source>
</evidence>
<evidence type="ECO:0000303" key="6">
    <source>
    </source>
</evidence>
<evidence type="ECO:0000303" key="7">
    <source>
    </source>
</evidence>
<evidence type="ECO:0000305" key="8"/>
<evidence type="ECO:0000312" key="9">
    <source>
        <dbReference type="Araport" id="AT4G17670"/>
    </source>
</evidence>
<evidence type="ECO:0000312" key="10">
    <source>
        <dbReference type="EMBL" id="AEE83931.1"/>
    </source>
</evidence>
<comment type="function">
    <text evidence="3">May act as an adapter to facilitate the interaction of SnRK1 complex with effector proteins, conferring tissue- and stimulus-type specific differences in the SnRK1 regulation pathway.</text>
</comment>
<comment type="subunit">
    <text evidence="3 5">Interacts with KIN10 and KIN11 via its FLZ-type zinc finger domain (PubMed:24600465, PubMed:29945970). Interacts with KINB1, KINB2, KINB3 and SNF4 via its N-terminal part (PubMed:29945970). Forms heterodimer with FLZ7, FLZ10, FLZ11, FLZ12, FLZ15, FLZ17 and FLZ18 in vitro (PubMed:29945970).</text>
</comment>
<comment type="induction">
    <text evidence="4">Down-regulated in response to mild as well as prolonged energy depletion (PubMed:26442059). Down-regulated by the glycolysis inhibitor 2DG (PubMed:26442059). Up-regulated by glucose, sucrose and mannose (PubMed:26442059).</text>
</comment>
<comment type="similarity">
    <text evidence="8">Belongs to the FLZ family.</text>
</comment>
<comment type="sequence caution" evidence="8">
    <conflict type="erroneous gene model prediction">
        <sequence resource="EMBL-CDS" id="CAB10547"/>
    </conflict>
</comment>
<comment type="sequence caution" evidence="8">
    <conflict type="erroneous gene model prediction">
        <sequence resource="EMBL-CDS" id="CAB78770"/>
    </conflict>
</comment>
<feature type="chain" id="PRO_0000445493" description="FCS-Like Zinc finger 2">
    <location>
        <begin position="1"/>
        <end position="159"/>
    </location>
</feature>
<feature type="zinc finger region" description="FLZ-type" evidence="1">
    <location>
        <begin position="75"/>
        <end position="119"/>
    </location>
</feature>
<feature type="region of interest" description="Disordered" evidence="2">
    <location>
        <begin position="113"/>
        <end position="159"/>
    </location>
</feature>
<feature type="compositionally biased region" description="Basic and acidic residues" evidence="2">
    <location>
        <begin position="113"/>
        <end position="122"/>
    </location>
</feature>
<feature type="sequence conflict" description="In Ref. 5; AAM65981." evidence="8" ref="5">
    <original>N</original>
    <variation>D</variation>
    <location>
        <position position="148"/>
    </location>
</feature>
<sequence>MEVSMRKPYFIEEEDDGFVSLSEMEAGVSSPSCYNYPQSYYYNHHHHQYSVSSPRSGKFHDFRFDNSYYGYGQPHFLDSCFLCKKRLGDNRDIFMYRGDTPFCSEECREEQIERDEAKEKKQSLSTSVKAMRRNEKRSSSSSPTRSRNYAFRTGTVAAA</sequence>
<keyword id="KW-0479">Metal-binding</keyword>
<keyword id="KW-1185">Reference proteome</keyword>
<keyword id="KW-0862">Zinc</keyword>
<keyword id="KW-0863">Zinc-finger</keyword>
<dbReference type="EMBL" id="Z97343">
    <property type="protein sequence ID" value="CAB10547.1"/>
    <property type="status" value="ALT_SEQ"/>
    <property type="molecule type" value="Genomic_DNA"/>
</dbReference>
<dbReference type="EMBL" id="AL161546">
    <property type="protein sequence ID" value="CAB78770.1"/>
    <property type="status" value="ALT_SEQ"/>
    <property type="molecule type" value="Genomic_DNA"/>
</dbReference>
<dbReference type="EMBL" id="CP002687">
    <property type="protein sequence ID" value="AEE83931.1"/>
    <property type="molecule type" value="Genomic_DNA"/>
</dbReference>
<dbReference type="EMBL" id="AY064001">
    <property type="protein sequence ID" value="AAL36357.1"/>
    <property type="molecule type" value="mRNA"/>
</dbReference>
<dbReference type="EMBL" id="AY117186">
    <property type="protein sequence ID" value="AAM51261.1"/>
    <property type="molecule type" value="mRNA"/>
</dbReference>
<dbReference type="EMBL" id="AY088445">
    <property type="protein sequence ID" value="AAM65981.1"/>
    <property type="molecule type" value="mRNA"/>
</dbReference>
<dbReference type="PIR" id="F71446">
    <property type="entry name" value="F71446"/>
</dbReference>
<dbReference type="RefSeq" id="NP_567534.1">
    <property type="nucleotide sequence ID" value="NM_117875.4"/>
</dbReference>
<dbReference type="FunCoup" id="Q8VZM9">
    <property type="interactions" value="182"/>
</dbReference>
<dbReference type="IntAct" id="Q8VZM9">
    <property type="interactions" value="3"/>
</dbReference>
<dbReference type="STRING" id="3702.Q8VZM9"/>
<dbReference type="PaxDb" id="3702-AT4G17670.1"/>
<dbReference type="ProteomicsDB" id="228970"/>
<dbReference type="EnsemblPlants" id="AT4G17670.1">
    <property type="protein sequence ID" value="AT4G17670.1"/>
    <property type="gene ID" value="AT4G17670"/>
</dbReference>
<dbReference type="GeneID" id="827487"/>
<dbReference type="Gramene" id="AT4G17670.1">
    <property type="protein sequence ID" value="AT4G17670.1"/>
    <property type="gene ID" value="AT4G17670"/>
</dbReference>
<dbReference type="KEGG" id="ath:AT4G17670"/>
<dbReference type="Araport" id="AT4G17670"/>
<dbReference type="TAIR" id="AT4G17670"/>
<dbReference type="eggNOG" id="ENOG502RZD3">
    <property type="taxonomic scope" value="Eukaryota"/>
</dbReference>
<dbReference type="HOGENOM" id="CLU_109662_0_0_1"/>
<dbReference type="InParanoid" id="Q8VZM9"/>
<dbReference type="OMA" id="DYAFHTG"/>
<dbReference type="PhylomeDB" id="Q8VZM9"/>
<dbReference type="PRO" id="PR:Q8VZM9"/>
<dbReference type="Proteomes" id="UP000006548">
    <property type="component" value="Chromosome 4"/>
</dbReference>
<dbReference type="ExpressionAtlas" id="Q8VZM9">
    <property type="expression patterns" value="baseline and differential"/>
</dbReference>
<dbReference type="GO" id="GO:0019900">
    <property type="term" value="F:kinase binding"/>
    <property type="evidence" value="ECO:0000353"/>
    <property type="project" value="UniProtKB"/>
</dbReference>
<dbReference type="GO" id="GO:0008270">
    <property type="term" value="F:zinc ion binding"/>
    <property type="evidence" value="ECO:0007669"/>
    <property type="project" value="UniProtKB-KW"/>
</dbReference>
<dbReference type="GO" id="GO:0009749">
    <property type="term" value="P:response to glucose"/>
    <property type="evidence" value="ECO:0000270"/>
    <property type="project" value="UniProtKB"/>
</dbReference>
<dbReference type="GO" id="GO:1905582">
    <property type="term" value="P:response to mannose"/>
    <property type="evidence" value="ECO:0000270"/>
    <property type="project" value="UniProtKB"/>
</dbReference>
<dbReference type="GO" id="GO:0042594">
    <property type="term" value="P:response to starvation"/>
    <property type="evidence" value="ECO:0000270"/>
    <property type="project" value="UniProtKB"/>
</dbReference>
<dbReference type="GO" id="GO:0009744">
    <property type="term" value="P:response to sucrose"/>
    <property type="evidence" value="ECO:0000270"/>
    <property type="project" value="UniProtKB"/>
</dbReference>
<dbReference type="InterPro" id="IPR044533">
    <property type="entry name" value="FLZ1/2/3"/>
</dbReference>
<dbReference type="InterPro" id="IPR007650">
    <property type="entry name" value="Zf-FLZ_dom"/>
</dbReference>
<dbReference type="PANTHER" id="PTHR46057">
    <property type="entry name" value="FCS-LIKE ZINC FINGER 1-RELATED"/>
    <property type="match status" value="1"/>
</dbReference>
<dbReference type="PANTHER" id="PTHR46057:SF23">
    <property type="entry name" value="FCS-LIKE ZINC FINGER 2"/>
    <property type="match status" value="1"/>
</dbReference>
<dbReference type="Pfam" id="PF04570">
    <property type="entry name" value="zf-FLZ"/>
    <property type="match status" value="1"/>
</dbReference>
<dbReference type="PROSITE" id="PS51795">
    <property type="entry name" value="ZF_FLZ"/>
    <property type="match status" value="1"/>
</dbReference>
<proteinExistence type="evidence at protein level"/>
<protein>
    <recommendedName>
        <fullName evidence="7">FCS-Like Zinc finger 2</fullName>
    </recommendedName>
</protein>
<organism>
    <name type="scientific">Arabidopsis thaliana</name>
    <name type="common">Mouse-ear cress</name>
    <dbReference type="NCBI Taxonomy" id="3702"/>
    <lineage>
        <taxon>Eukaryota</taxon>
        <taxon>Viridiplantae</taxon>
        <taxon>Streptophyta</taxon>
        <taxon>Embryophyta</taxon>
        <taxon>Tracheophyta</taxon>
        <taxon>Spermatophyta</taxon>
        <taxon>Magnoliopsida</taxon>
        <taxon>eudicotyledons</taxon>
        <taxon>Gunneridae</taxon>
        <taxon>Pentapetalae</taxon>
        <taxon>rosids</taxon>
        <taxon>malvids</taxon>
        <taxon>Brassicales</taxon>
        <taxon>Brassicaceae</taxon>
        <taxon>Camelineae</taxon>
        <taxon>Arabidopsis</taxon>
    </lineage>
</organism>
<gene>
    <name evidence="7" type="primary">FLZ2</name>
    <name evidence="6" type="synonym">DUF581-12</name>
    <name evidence="9" type="ordered locus">At4g17670</name>
    <name evidence="10" type="ORF">dl4870c</name>
    <name evidence="10" type="ORF">FCAALL.414</name>
</gene>
<accession>Q8VZM9</accession>
<accession>O23607</accession>
<accession>Q8L9G6</accession>